<organism>
    <name type="scientific">Streptococcus pyogenes serotype M3 (strain ATCC BAA-595 / MGAS315)</name>
    <dbReference type="NCBI Taxonomy" id="198466"/>
    <lineage>
        <taxon>Bacteria</taxon>
        <taxon>Bacillati</taxon>
        <taxon>Bacillota</taxon>
        <taxon>Bacilli</taxon>
        <taxon>Lactobacillales</taxon>
        <taxon>Streptococcaceae</taxon>
        <taxon>Streptococcus</taxon>
    </lineage>
</organism>
<keyword id="KW-0056">Arginine metabolism</keyword>
<keyword id="KW-0963">Cytoplasm</keyword>
<keyword id="KW-0808">Transferase</keyword>
<gene>
    <name type="primary">arcB</name>
    <name type="ordered locus">SpyM3_1194</name>
</gene>
<dbReference type="EC" id="2.1.3.3"/>
<dbReference type="EMBL" id="AE014074">
    <property type="protein sequence ID" value="AAM79801.1"/>
    <property type="molecule type" value="Genomic_DNA"/>
</dbReference>
<dbReference type="SMR" id="P0DC82"/>
<dbReference type="KEGG" id="spg:SpyM3_1194"/>
<dbReference type="HOGENOM" id="CLU_043846_3_1_9"/>
<dbReference type="UniPathway" id="UPA00254">
    <property type="reaction ID" value="UER00365"/>
</dbReference>
<dbReference type="Proteomes" id="UP000000564">
    <property type="component" value="Chromosome"/>
</dbReference>
<dbReference type="GO" id="GO:0005737">
    <property type="term" value="C:cytoplasm"/>
    <property type="evidence" value="ECO:0007669"/>
    <property type="project" value="UniProtKB-SubCell"/>
</dbReference>
<dbReference type="GO" id="GO:0016597">
    <property type="term" value="F:amino acid binding"/>
    <property type="evidence" value="ECO:0007669"/>
    <property type="project" value="InterPro"/>
</dbReference>
<dbReference type="GO" id="GO:0004585">
    <property type="term" value="F:ornithine carbamoyltransferase activity"/>
    <property type="evidence" value="ECO:0007669"/>
    <property type="project" value="UniProtKB-UniRule"/>
</dbReference>
<dbReference type="GO" id="GO:0042450">
    <property type="term" value="P:arginine biosynthetic process via ornithine"/>
    <property type="evidence" value="ECO:0007669"/>
    <property type="project" value="TreeGrafter"/>
</dbReference>
<dbReference type="GO" id="GO:0019547">
    <property type="term" value="P:arginine catabolic process to ornithine"/>
    <property type="evidence" value="ECO:0007669"/>
    <property type="project" value="UniProtKB-UniRule"/>
</dbReference>
<dbReference type="GO" id="GO:0019240">
    <property type="term" value="P:citrulline biosynthetic process"/>
    <property type="evidence" value="ECO:0007669"/>
    <property type="project" value="TreeGrafter"/>
</dbReference>
<dbReference type="FunFam" id="3.40.50.1370:FF:000004">
    <property type="entry name" value="Ornithine carbamoyltransferase"/>
    <property type="match status" value="1"/>
</dbReference>
<dbReference type="Gene3D" id="3.40.50.1370">
    <property type="entry name" value="Aspartate/ornithine carbamoyltransferase"/>
    <property type="match status" value="2"/>
</dbReference>
<dbReference type="HAMAP" id="MF_01109">
    <property type="entry name" value="OTCase"/>
    <property type="match status" value="1"/>
</dbReference>
<dbReference type="InterPro" id="IPR006132">
    <property type="entry name" value="Asp/Orn_carbamoyltranf_P-bd"/>
</dbReference>
<dbReference type="InterPro" id="IPR006130">
    <property type="entry name" value="Asp/Orn_carbamoylTrfase"/>
</dbReference>
<dbReference type="InterPro" id="IPR036901">
    <property type="entry name" value="Asp/Orn_carbamoylTrfase_sf"/>
</dbReference>
<dbReference type="InterPro" id="IPR006131">
    <property type="entry name" value="Asp_carbamoyltransf_Asp/Orn-bd"/>
</dbReference>
<dbReference type="InterPro" id="IPR002292">
    <property type="entry name" value="Orn/put_carbamltrans"/>
</dbReference>
<dbReference type="InterPro" id="IPR024904">
    <property type="entry name" value="OTCase_ArgI"/>
</dbReference>
<dbReference type="NCBIfam" id="TIGR00658">
    <property type="entry name" value="orni_carb_tr"/>
    <property type="match status" value="1"/>
</dbReference>
<dbReference type="NCBIfam" id="NF001986">
    <property type="entry name" value="PRK00779.1"/>
    <property type="match status" value="1"/>
</dbReference>
<dbReference type="PANTHER" id="PTHR45753:SF1">
    <property type="entry name" value="ORNITHINE CARBAMOYLTRANSFERASE, CATABOLIC"/>
    <property type="match status" value="1"/>
</dbReference>
<dbReference type="PANTHER" id="PTHR45753">
    <property type="entry name" value="ORNITHINE CARBAMOYLTRANSFERASE, MITOCHONDRIAL"/>
    <property type="match status" value="1"/>
</dbReference>
<dbReference type="Pfam" id="PF00185">
    <property type="entry name" value="OTCace"/>
    <property type="match status" value="1"/>
</dbReference>
<dbReference type="Pfam" id="PF02729">
    <property type="entry name" value="OTCace_N"/>
    <property type="match status" value="1"/>
</dbReference>
<dbReference type="PRINTS" id="PR00100">
    <property type="entry name" value="AOTCASE"/>
</dbReference>
<dbReference type="PRINTS" id="PR00102">
    <property type="entry name" value="OTCASE"/>
</dbReference>
<dbReference type="SUPFAM" id="SSF53671">
    <property type="entry name" value="Aspartate/ornithine carbamoyltransferase"/>
    <property type="match status" value="1"/>
</dbReference>
<dbReference type="PROSITE" id="PS00097">
    <property type="entry name" value="CARBAMOYLTRANSFERASE"/>
    <property type="match status" value="1"/>
</dbReference>
<proteinExistence type="inferred from homology"/>
<accession>P0DC82</accession>
<accession>P65609</accession>
<accession>Q8P052</accession>
<feature type="initiator methionine" description="Removed" evidence="1">
    <location>
        <position position="1"/>
    </location>
</feature>
<feature type="chain" id="PRO_0000113039" description="Ornithine carbamoyltransferase, catabolic">
    <location>
        <begin position="2"/>
        <end position="337"/>
    </location>
</feature>
<feature type="binding site" evidence="2">
    <location>
        <begin position="57"/>
        <end position="60"/>
    </location>
    <ligand>
        <name>carbamoyl phosphate</name>
        <dbReference type="ChEBI" id="CHEBI:58228"/>
    </ligand>
</feature>
<feature type="binding site" evidence="2">
    <location>
        <position position="84"/>
    </location>
    <ligand>
        <name>carbamoyl phosphate</name>
        <dbReference type="ChEBI" id="CHEBI:58228"/>
    </ligand>
</feature>
<feature type="binding site" evidence="2">
    <location>
        <position position="108"/>
    </location>
    <ligand>
        <name>carbamoyl phosphate</name>
        <dbReference type="ChEBI" id="CHEBI:58228"/>
    </ligand>
</feature>
<feature type="binding site" evidence="2">
    <location>
        <begin position="135"/>
        <end position="138"/>
    </location>
    <ligand>
        <name>carbamoyl phosphate</name>
        <dbReference type="ChEBI" id="CHEBI:58228"/>
    </ligand>
</feature>
<feature type="binding site" evidence="2">
    <location>
        <position position="167"/>
    </location>
    <ligand>
        <name>L-ornithine</name>
        <dbReference type="ChEBI" id="CHEBI:46911"/>
    </ligand>
</feature>
<feature type="binding site" evidence="2">
    <location>
        <position position="231"/>
    </location>
    <ligand>
        <name>L-ornithine</name>
        <dbReference type="ChEBI" id="CHEBI:46911"/>
    </ligand>
</feature>
<feature type="binding site" evidence="2">
    <location>
        <begin position="235"/>
        <end position="236"/>
    </location>
    <ligand>
        <name>L-ornithine</name>
        <dbReference type="ChEBI" id="CHEBI:46911"/>
    </ligand>
</feature>
<feature type="binding site" evidence="2">
    <location>
        <begin position="272"/>
        <end position="273"/>
    </location>
    <ligand>
        <name>carbamoyl phosphate</name>
        <dbReference type="ChEBI" id="CHEBI:58228"/>
    </ligand>
</feature>
<feature type="binding site" evidence="2">
    <location>
        <position position="317"/>
    </location>
    <ligand>
        <name>carbamoyl phosphate</name>
        <dbReference type="ChEBI" id="CHEBI:58228"/>
    </ligand>
</feature>
<name>OTCC_STRP3</name>
<evidence type="ECO:0000250" key="1"/>
<evidence type="ECO:0000255" key="2">
    <source>
        <dbReference type="HAMAP-Rule" id="MF_01109"/>
    </source>
</evidence>
<evidence type="ECO:0000305" key="3"/>
<protein>
    <recommendedName>
        <fullName>Ornithine carbamoyltransferase, catabolic</fullName>
        <shortName>OTCase</shortName>
        <ecNumber>2.1.3.3</ecNumber>
    </recommendedName>
</protein>
<comment type="function">
    <text evidence="1">Reversibly catalyzes the transfer of the carbamoyl group from carbamoyl phosphate (CP) to the N(epsilon) atom of ornithine (ORN) to produce L-citrulline.</text>
</comment>
<comment type="catalytic activity">
    <reaction>
        <text>carbamoyl phosphate + L-ornithine = L-citrulline + phosphate + H(+)</text>
        <dbReference type="Rhea" id="RHEA:19513"/>
        <dbReference type="ChEBI" id="CHEBI:15378"/>
        <dbReference type="ChEBI" id="CHEBI:43474"/>
        <dbReference type="ChEBI" id="CHEBI:46911"/>
        <dbReference type="ChEBI" id="CHEBI:57743"/>
        <dbReference type="ChEBI" id="CHEBI:58228"/>
        <dbReference type="EC" id="2.1.3.3"/>
    </reaction>
</comment>
<comment type="pathway">
    <text>Amino-acid degradation; L-arginine degradation via ADI pathway; carbamoyl phosphate from L-arginine: step 2/2.</text>
</comment>
<comment type="subcellular location">
    <subcellularLocation>
        <location evidence="1">Cytoplasm</location>
    </subcellularLocation>
</comment>
<comment type="similarity">
    <text evidence="3">Belongs to the aspartate/ornithine carbamoyltransferase superfamily. OTCase family.</text>
</comment>
<sequence>MTQVFQGRSFLAEKDFTRAELEYLIDFSAHLKDLKKRGVPHHYLEGKNIALLFEKTSTRTRAAFTTAAIDLGAHPEYLGANDIQLGKKESTEDTAKVLGRMFDGIEFRGFSQRMVEELAEFSGVPVWNGLTDEWHPTQMLADYLTVKENFGKLEGLTLVYCGDGRNNVANSLLVTGAILGVNVHIFSPKELFPEEEIVTLAEGYAKESGARILITEDADEAVKGADVLYTDVWVSMGEEDKFKERVELLQPYQVNMDLVQKAGNDKLIFLHCLPAFHDTNTVYGKDVAEKFGVKEMEVTDEVFRSKYARHFDQAENRMHTIKAVMAATLGNLFIPKV</sequence>
<reference key="1">
    <citation type="journal article" date="2002" name="Proc. Natl. Acad. Sci. U.S.A.">
        <title>Genome sequence of a serotype M3 strain of group A Streptococcus: phage-encoded toxins, the high-virulence phenotype, and clone emergence.</title>
        <authorList>
            <person name="Beres S.B."/>
            <person name="Sylva G.L."/>
            <person name="Barbian K.D."/>
            <person name="Lei B."/>
            <person name="Hoff J.S."/>
            <person name="Mammarella N.D."/>
            <person name="Liu M.-Y."/>
            <person name="Smoot J.C."/>
            <person name="Porcella S.F."/>
            <person name="Parkins L.D."/>
            <person name="Campbell D.S."/>
            <person name="Smith T.M."/>
            <person name="McCormick J.K."/>
            <person name="Leung D.Y.M."/>
            <person name="Schlievert P.M."/>
            <person name="Musser J.M."/>
        </authorList>
    </citation>
    <scope>NUCLEOTIDE SEQUENCE [LARGE SCALE GENOMIC DNA]</scope>
    <source>
        <strain>ATCC BAA-595 / MGAS315</strain>
    </source>
</reference>